<feature type="chain" id="PRO_0000212671" description="Inhibitor of growth protein 5">
    <location>
        <begin position="1"/>
        <end position="240"/>
    </location>
</feature>
<feature type="zinc finger region" description="PHD-type" evidence="1">
    <location>
        <begin position="186"/>
        <end position="235"/>
    </location>
</feature>
<feature type="region of interest" description="Disordered" evidence="2">
    <location>
        <begin position="116"/>
        <end position="165"/>
    </location>
</feature>
<feature type="binding site" evidence="6 12">
    <location>
        <position position="189"/>
    </location>
    <ligand>
        <name>Zn(2+)</name>
        <dbReference type="ChEBI" id="CHEBI:29105"/>
        <label>1</label>
    </ligand>
</feature>
<feature type="binding site" evidence="6 12">
    <location>
        <position position="191"/>
    </location>
    <ligand>
        <name>Zn(2+)</name>
        <dbReference type="ChEBI" id="CHEBI:29105"/>
        <label>1</label>
    </ligand>
</feature>
<feature type="binding site" evidence="6 12">
    <location>
        <position position="202"/>
    </location>
    <ligand>
        <name>Zn(2+)</name>
        <dbReference type="ChEBI" id="CHEBI:29105"/>
        <label>2</label>
    </ligand>
</feature>
<feature type="binding site" evidence="6 12">
    <location>
        <position position="207"/>
    </location>
    <ligand>
        <name>Zn(2+)</name>
        <dbReference type="ChEBI" id="CHEBI:29105"/>
        <label>2</label>
    </ligand>
</feature>
<feature type="binding site" evidence="6 12">
    <location>
        <position position="213"/>
    </location>
    <ligand>
        <name>Zn(2+)</name>
        <dbReference type="ChEBI" id="CHEBI:29105"/>
        <label>1</label>
    </ligand>
</feature>
<feature type="binding site" evidence="6 12">
    <location>
        <position position="216"/>
    </location>
    <ligand>
        <name>Zn(2+)</name>
        <dbReference type="ChEBI" id="CHEBI:29105"/>
        <label>1</label>
    </ligand>
</feature>
<feature type="binding site" evidence="6 12">
    <location>
        <position position="229"/>
    </location>
    <ligand>
        <name>Zn(2+)</name>
        <dbReference type="ChEBI" id="CHEBI:29105"/>
        <label>2</label>
    </ligand>
</feature>
<feature type="binding site" evidence="6 12">
    <location>
        <position position="232"/>
    </location>
    <ligand>
        <name>Zn(2+)</name>
        <dbReference type="ChEBI" id="CHEBI:29105"/>
        <label>2</label>
    </ligand>
</feature>
<feature type="site" description="Histone H3K4me3 binding" evidence="6 12">
    <location>
        <position position="188"/>
    </location>
</feature>
<feature type="site" description="Histone H3K4me3 binding" evidence="6 12">
    <location>
        <position position="199"/>
    </location>
</feature>
<feature type="site" description="Histone H3K4me3 binding" evidence="6 12">
    <location>
        <position position="203"/>
    </location>
</feature>
<feature type="site" description="Histone H3K4me3 binding" evidence="6 12">
    <location>
        <position position="211"/>
    </location>
</feature>
<feature type="modified residue" description="N6-acetyllysine" evidence="14">
    <location>
        <position position="114"/>
    </location>
</feature>
<feature type="modified residue" description="Phosphoserine" evidence="13 15 16 17 18">
    <location>
        <position position="118"/>
    </location>
</feature>
<feature type="modified residue" description="Omega-N-methylarginine" evidence="19">
    <location>
        <position position="126"/>
    </location>
</feature>
<feature type="splice variant" id="VSP_012528" description="In isoform 2." evidence="10">
    <location>
        <begin position="227"/>
        <end position="240"/>
    </location>
</feature>
<feature type="helix" evidence="22">
    <location>
        <begin position="1"/>
        <end position="9"/>
    </location>
</feature>
<feature type="helix" evidence="21">
    <location>
        <begin position="10"/>
        <end position="13"/>
    </location>
</feature>
<feature type="helix" evidence="22">
    <location>
        <begin position="14"/>
        <end position="16"/>
    </location>
</feature>
<feature type="helix" evidence="22">
    <location>
        <begin position="19"/>
        <end position="52"/>
    </location>
</feature>
<feature type="helix" evidence="22">
    <location>
        <begin position="53"/>
        <end position="55"/>
    </location>
</feature>
<feature type="helix" evidence="22">
    <location>
        <begin position="58"/>
        <end position="100"/>
    </location>
</feature>
<feature type="turn" evidence="20">
    <location>
        <begin position="189"/>
        <end position="192"/>
    </location>
</feature>
<feature type="strand" evidence="20">
    <location>
        <begin position="197"/>
        <end position="201"/>
    </location>
</feature>
<feature type="strand" evidence="20">
    <location>
        <begin position="211"/>
        <end position="213"/>
    </location>
</feature>
<feature type="helix" evidence="20">
    <location>
        <begin position="215"/>
        <end position="217"/>
    </location>
</feature>
<feature type="helix" evidence="20">
    <location>
        <begin position="230"/>
        <end position="233"/>
    </location>
</feature>
<organism>
    <name type="scientific">Homo sapiens</name>
    <name type="common">Human</name>
    <dbReference type="NCBI Taxonomy" id="9606"/>
    <lineage>
        <taxon>Eukaryota</taxon>
        <taxon>Metazoa</taxon>
        <taxon>Chordata</taxon>
        <taxon>Craniata</taxon>
        <taxon>Vertebrata</taxon>
        <taxon>Euteleostomi</taxon>
        <taxon>Mammalia</taxon>
        <taxon>Eutheria</taxon>
        <taxon>Euarchontoglires</taxon>
        <taxon>Primates</taxon>
        <taxon>Haplorrhini</taxon>
        <taxon>Catarrhini</taxon>
        <taxon>Hominidae</taxon>
        <taxon>Homo</taxon>
    </lineage>
</organism>
<accession>Q8WYH8</accession>
<accession>A8K1P3</accession>
<accession>Q53NU6</accession>
<accession>Q57Z54</accession>
<accession>Q9BS30</accession>
<keyword id="KW-0002">3D-structure</keyword>
<keyword id="KW-0007">Acetylation</keyword>
<keyword id="KW-0010">Activator</keyword>
<keyword id="KW-0025">Alternative splicing</keyword>
<keyword id="KW-0156">Chromatin regulator</keyword>
<keyword id="KW-0158">Chromosome</keyword>
<keyword id="KW-0479">Metal-binding</keyword>
<keyword id="KW-0488">Methylation</keyword>
<keyword id="KW-0539">Nucleus</keyword>
<keyword id="KW-0597">Phosphoprotein</keyword>
<keyword id="KW-1267">Proteomics identification</keyword>
<keyword id="KW-1185">Reference proteome</keyword>
<keyword id="KW-0804">Transcription</keyword>
<keyword id="KW-0805">Transcription regulation</keyword>
<keyword id="KW-0862">Zinc</keyword>
<keyword id="KW-0863">Zinc-finger</keyword>
<reference key="1">
    <citation type="journal article" date="2003" name="Cancer Res.">
        <title>p29ING4 and p28ING5 bind to p53 and p300, and enhance p53 activity.</title>
        <authorList>
            <person name="Shiseki M."/>
            <person name="Nagashima M."/>
            <person name="Pedeux R.M."/>
            <person name="Kitahama-Shiseki M."/>
            <person name="Miura K."/>
            <person name="Okamura S."/>
            <person name="Onogi H."/>
            <person name="Higashimoto Y."/>
            <person name="Appella E."/>
            <person name="Yokota J."/>
            <person name="Harris C.C."/>
        </authorList>
    </citation>
    <scope>NUCLEOTIDE SEQUENCE [MRNA] (ISOFORM 1)</scope>
    <scope>FUNCTION</scope>
    <scope>INTERACTION WITH EP300 AND TP53</scope>
    <source>
        <tissue>Placenta</tissue>
    </source>
</reference>
<reference key="2">
    <citation type="journal article" date="2004" name="Nat. Genet.">
        <title>Complete sequencing and characterization of 21,243 full-length human cDNAs.</title>
        <authorList>
            <person name="Ota T."/>
            <person name="Suzuki Y."/>
            <person name="Nishikawa T."/>
            <person name="Otsuki T."/>
            <person name="Sugiyama T."/>
            <person name="Irie R."/>
            <person name="Wakamatsu A."/>
            <person name="Hayashi K."/>
            <person name="Sato H."/>
            <person name="Nagai K."/>
            <person name="Kimura K."/>
            <person name="Makita H."/>
            <person name="Sekine M."/>
            <person name="Obayashi M."/>
            <person name="Nishi T."/>
            <person name="Shibahara T."/>
            <person name="Tanaka T."/>
            <person name="Ishii S."/>
            <person name="Yamamoto J."/>
            <person name="Saito K."/>
            <person name="Kawai Y."/>
            <person name="Isono Y."/>
            <person name="Nakamura Y."/>
            <person name="Nagahari K."/>
            <person name="Murakami K."/>
            <person name="Yasuda T."/>
            <person name="Iwayanagi T."/>
            <person name="Wagatsuma M."/>
            <person name="Shiratori A."/>
            <person name="Sudo H."/>
            <person name="Hosoiri T."/>
            <person name="Kaku Y."/>
            <person name="Kodaira H."/>
            <person name="Kondo H."/>
            <person name="Sugawara M."/>
            <person name="Takahashi M."/>
            <person name="Kanda K."/>
            <person name="Yokoi T."/>
            <person name="Furuya T."/>
            <person name="Kikkawa E."/>
            <person name="Omura Y."/>
            <person name="Abe K."/>
            <person name="Kamihara K."/>
            <person name="Katsuta N."/>
            <person name="Sato K."/>
            <person name="Tanikawa M."/>
            <person name="Yamazaki M."/>
            <person name="Ninomiya K."/>
            <person name="Ishibashi T."/>
            <person name="Yamashita H."/>
            <person name="Murakawa K."/>
            <person name="Fujimori K."/>
            <person name="Tanai H."/>
            <person name="Kimata M."/>
            <person name="Watanabe M."/>
            <person name="Hiraoka S."/>
            <person name="Chiba Y."/>
            <person name="Ishida S."/>
            <person name="Ono Y."/>
            <person name="Takiguchi S."/>
            <person name="Watanabe S."/>
            <person name="Yosida M."/>
            <person name="Hotuta T."/>
            <person name="Kusano J."/>
            <person name="Kanehori K."/>
            <person name="Takahashi-Fujii A."/>
            <person name="Hara H."/>
            <person name="Tanase T.-O."/>
            <person name="Nomura Y."/>
            <person name="Togiya S."/>
            <person name="Komai F."/>
            <person name="Hara R."/>
            <person name="Takeuchi K."/>
            <person name="Arita M."/>
            <person name="Imose N."/>
            <person name="Musashino K."/>
            <person name="Yuuki H."/>
            <person name="Oshima A."/>
            <person name="Sasaki N."/>
            <person name="Aotsuka S."/>
            <person name="Yoshikawa Y."/>
            <person name="Matsunawa H."/>
            <person name="Ichihara T."/>
            <person name="Shiohata N."/>
            <person name="Sano S."/>
            <person name="Moriya S."/>
            <person name="Momiyama H."/>
            <person name="Satoh N."/>
            <person name="Takami S."/>
            <person name="Terashima Y."/>
            <person name="Suzuki O."/>
            <person name="Nakagawa S."/>
            <person name="Senoh A."/>
            <person name="Mizoguchi H."/>
            <person name="Goto Y."/>
            <person name="Shimizu F."/>
            <person name="Wakebe H."/>
            <person name="Hishigaki H."/>
            <person name="Watanabe T."/>
            <person name="Sugiyama A."/>
            <person name="Takemoto M."/>
            <person name="Kawakami B."/>
            <person name="Yamazaki M."/>
            <person name="Watanabe K."/>
            <person name="Kumagai A."/>
            <person name="Itakura S."/>
            <person name="Fukuzumi Y."/>
            <person name="Fujimori Y."/>
            <person name="Komiyama M."/>
            <person name="Tashiro H."/>
            <person name="Tanigami A."/>
            <person name="Fujiwara T."/>
            <person name="Ono T."/>
            <person name="Yamada K."/>
            <person name="Fujii Y."/>
            <person name="Ozaki K."/>
            <person name="Hirao M."/>
            <person name="Ohmori Y."/>
            <person name="Kawabata A."/>
            <person name="Hikiji T."/>
            <person name="Kobatake N."/>
            <person name="Inagaki H."/>
            <person name="Ikema Y."/>
            <person name="Okamoto S."/>
            <person name="Okitani R."/>
            <person name="Kawakami T."/>
            <person name="Noguchi S."/>
            <person name="Itoh T."/>
            <person name="Shigeta K."/>
            <person name="Senba T."/>
            <person name="Matsumura K."/>
            <person name="Nakajima Y."/>
            <person name="Mizuno T."/>
            <person name="Morinaga M."/>
            <person name="Sasaki M."/>
            <person name="Togashi T."/>
            <person name="Oyama M."/>
            <person name="Hata H."/>
            <person name="Watanabe M."/>
            <person name="Komatsu T."/>
            <person name="Mizushima-Sugano J."/>
            <person name="Satoh T."/>
            <person name="Shirai Y."/>
            <person name="Takahashi Y."/>
            <person name="Nakagawa K."/>
            <person name="Okumura K."/>
            <person name="Nagase T."/>
            <person name="Nomura N."/>
            <person name="Kikuchi H."/>
            <person name="Masuho Y."/>
            <person name="Yamashita R."/>
            <person name="Nakai K."/>
            <person name="Yada T."/>
            <person name="Nakamura Y."/>
            <person name="Ohara O."/>
            <person name="Isogai T."/>
            <person name="Sugano S."/>
        </authorList>
    </citation>
    <scope>NUCLEOTIDE SEQUENCE [LARGE SCALE MRNA] (ISOFORM 1)</scope>
    <source>
        <tissue>Hippocampus</tissue>
    </source>
</reference>
<reference key="3">
    <citation type="journal article" date="2005" name="Nature">
        <title>Generation and annotation of the DNA sequences of human chromosomes 2 and 4.</title>
        <authorList>
            <person name="Hillier L.W."/>
            <person name="Graves T.A."/>
            <person name="Fulton R.S."/>
            <person name="Fulton L.A."/>
            <person name="Pepin K.H."/>
            <person name="Minx P."/>
            <person name="Wagner-McPherson C."/>
            <person name="Layman D."/>
            <person name="Wylie K."/>
            <person name="Sekhon M."/>
            <person name="Becker M.C."/>
            <person name="Fewell G.A."/>
            <person name="Delehaunty K.D."/>
            <person name="Miner T.L."/>
            <person name="Nash W.E."/>
            <person name="Kremitzki C."/>
            <person name="Oddy L."/>
            <person name="Du H."/>
            <person name="Sun H."/>
            <person name="Bradshaw-Cordum H."/>
            <person name="Ali J."/>
            <person name="Carter J."/>
            <person name="Cordes M."/>
            <person name="Harris A."/>
            <person name="Isak A."/>
            <person name="van Brunt A."/>
            <person name="Nguyen C."/>
            <person name="Du F."/>
            <person name="Courtney L."/>
            <person name="Kalicki J."/>
            <person name="Ozersky P."/>
            <person name="Abbott S."/>
            <person name="Armstrong J."/>
            <person name="Belter E.A."/>
            <person name="Caruso L."/>
            <person name="Cedroni M."/>
            <person name="Cotton M."/>
            <person name="Davidson T."/>
            <person name="Desai A."/>
            <person name="Elliott G."/>
            <person name="Erb T."/>
            <person name="Fronick C."/>
            <person name="Gaige T."/>
            <person name="Haakenson W."/>
            <person name="Haglund K."/>
            <person name="Holmes A."/>
            <person name="Harkins R."/>
            <person name="Kim K."/>
            <person name="Kruchowski S.S."/>
            <person name="Strong C.M."/>
            <person name="Grewal N."/>
            <person name="Goyea E."/>
            <person name="Hou S."/>
            <person name="Levy A."/>
            <person name="Martinka S."/>
            <person name="Mead K."/>
            <person name="McLellan M.D."/>
            <person name="Meyer R."/>
            <person name="Randall-Maher J."/>
            <person name="Tomlinson C."/>
            <person name="Dauphin-Kohlberg S."/>
            <person name="Kozlowicz-Reilly A."/>
            <person name="Shah N."/>
            <person name="Swearengen-Shahid S."/>
            <person name="Snider J."/>
            <person name="Strong J.T."/>
            <person name="Thompson J."/>
            <person name="Yoakum M."/>
            <person name="Leonard S."/>
            <person name="Pearman C."/>
            <person name="Trani L."/>
            <person name="Radionenko M."/>
            <person name="Waligorski J.E."/>
            <person name="Wang C."/>
            <person name="Rock S.M."/>
            <person name="Tin-Wollam A.-M."/>
            <person name="Maupin R."/>
            <person name="Latreille P."/>
            <person name="Wendl M.C."/>
            <person name="Yang S.-P."/>
            <person name="Pohl C."/>
            <person name="Wallis J.W."/>
            <person name="Spieth J."/>
            <person name="Bieri T.A."/>
            <person name="Berkowicz N."/>
            <person name="Nelson J.O."/>
            <person name="Osborne J."/>
            <person name="Ding L."/>
            <person name="Meyer R."/>
            <person name="Sabo A."/>
            <person name="Shotland Y."/>
            <person name="Sinha P."/>
            <person name="Wohldmann P.E."/>
            <person name="Cook L.L."/>
            <person name="Hickenbotham M.T."/>
            <person name="Eldred J."/>
            <person name="Williams D."/>
            <person name="Jones T.A."/>
            <person name="She X."/>
            <person name="Ciccarelli F.D."/>
            <person name="Izaurralde E."/>
            <person name="Taylor J."/>
            <person name="Schmutz J."/>
            <person name="Myers R.M."/>
            <person name="Cox D.R."/>
            <person name="Huang X."/>
            <person name="McPherson J.D."/>
            <person name="Mardis E.R."/>
            <person name="Clifton S.W."/>
            <person name="Warren W.C."/>
            <person name="Chinwalla A.T."/>
            <person name="Eddy S.R."/>
            <person name="Marra M.A."/>
            <person name="Ovcharenko I."/>
            <person name="Furey T.S."/>
            <person name="Miller W."/>
            <person name="Eichler E.E."/>
            <person name="Bork P."/>
            <person name="Suyama M."/>
            <person name="Torrents D."/>
            <person name="Waterston R.H."/>
            <person name="Wilson R.K."/>
        </authorList>
    </citation>
    <scope>NUCLEOTIDE SEQUENCE [LARGE SCALE GENOMIC DNA]</scope>
</reference>
<reference key="4">
    <citation type="journal article" date="2004" name="Genome Res.">
        <title>The status, quality, and expansion of the NIH full-length cDNA project: the Mammalian Gene Collection (MGC).</title>
        <authorList>
            <consortium name="The MGC Project Team"/>
        </authorList>
    </citation>
    <scope>NUCLEOTIDE SEQUENCE [LARGE SCALE MRNA] (ISOFORMS 1 AND 2)</scope>
    <source>
        <tissue>Skin</tissue>
    </source>
</reference>
<reference key="5">
    <citation type="journal article" date="2006" name="Cell">
        <title>Global, in vivo, and site-specific phosphorylation dynamics in signaling networks.</title>
        <authorList>
            <person name="Olsen J.V."/>
            <person name="Blagoev B."/>
            <person name="Gnad F."/>
            <person name="Macek B."/>
            <person name="Kumar C."/>
            <person name="Mortensen P."/>
            <person name="Mann M."/>
        </authorList>
    </citation>
    <scope>PHOSPHORYLATION [LARGE SCALE ANALYSIS] AT SER-118</scope>
    <scope>IDENTIFICATION BY MASS SPECTROMETRY [LARGE SCALE ANALYSIS]</scope>
    <source>
        <tissue>Cervix carcinoma</tissue>
    </source>
</reference>
<reference key="6">
    <citation type="journal article" date="2006" name="Mol. Cell">
        <title>ING tumor suppressor proteins are critical regulators of chromatin acetylation required for genome expression and perpetuation.</title>
        <authorList>
            <person name="Doyon Y."/>
            <person name="Cayrou C."/>
            <person name="Ullah M."/>
            <person name="Landry A.-J."/>
            <person name="Cote V."/>
            <person name="Selleck W."/>
            <person name="Lane W.S."/>
            <person name="Tan S."/>
            <person name="Yang X.-J."/>
            <person name="Cote J."/>
        </authorList>
    </citation>
    <scope>FUNCTION</scope>
    <scope>IDENTIFICATION IN THE HBO1 COMPLEX AND THE MOZ/MORF COMPLEX</scope>
</reference>
<reference key="7">
    <citation type="journal article" date="2006" name="Nature">
        <title>ING2 PHD domain links histone H3 lysine 4 methylation to active gene repression.</title>
        <authorList>
            <person name="Shi X."/>
            <person name="Hong T."/>
            <person name="Walter K.L."/>
            <person name="Ewalt M."/>
            <person name="Michishita E."/>
            <person name="Hung T."/>
            <person name="Carney D."/>
            <person name="Pena P."/>
            <person name="Lan F."/>
            <person name="Kaadige M.R."/>
            <person name="Lacoste N."/>
            <person name="Cayrou C."/>
            <person name="Davrazou F."/>
            <person name="Saha A."/>
            <person name="Cairns B.R."/>
            <person name="Ayer D.E."/>
            <person name="Kutateladze T.G."/>
            <person name="Shi Y."/>
            <person name="Cote J."/>
            <person name="Chua K.F."/>
            <person name="Gozani O."/>
        </authorList>
    </citation>
    <scope>DOMAIN PHD-TYPE ZINC-FINGER</scope>
    <scope>INTERACTION WITH HISTONES H3K4ME3 AND H3K4ME2</scope>
</reference>
<reference key="8">
    <citation type="journal article" date="2008" name="Mol. Cell. Biol.">
        <title>Molecular architecture of quartet MOZ/MORF histone acetyltransferase complexes.</title>
        <authorList>
            <person name="Ullah M."/>
            <person name="Pelletier N."/>
            <person name="Xiao L."/>
            <person name="Zhao S.P."/>
            <person name="Wang K."/>
            <person name="Degerny C."/>
            <person name="Tahmasebi S."/>
            <person name="Cayrou C."/>
            <person name="Doyon Y."/>
            <person name="Goh S.-L."/>
            <person name="Champagne N."/>
            <person name="Cote J."/>
            <person name="Yang X.-J."/>
        </authorList>
    </citation>
    <scope>IDENTIFICATION IN THE MOZ/MORF COMPLEX</scope>
    <scope>INTERACTION WITH BRPF1</scope>
    <scope>SUBCELLULAR LOCATION</scope>
</reference>
<reference key="9">
    <citation type="journal article" date="2009" name="Sci. Signal.">
        <title>Quantitative phosphoproteomic analysis of T cell receptor signaling reveals system-wide modulation of protein-protein interactions.</title>
        <authorList>
            <person name="Mayya V."/>
            <person name="Lundgren D.H."/>
            <person name="Hwang S.-I."/>
            <person name="Rezaul K."/>
            <person name="Wu L."/>
            <person name="Eng J.K."/>
            <person name="Rodionov V."/>
            <person name="Han D.K."/>
        </authorList>
    </citation>
    <scope>PHOSPHORYLATION [LARGE SCALE ANALYSIS] AT SER-118</scope>
    <scope>IDENTIFICATION BY MASS SPECTROMETRY [LARGE SCALE ANALYSIS]</scope>
    <source>
        <tissue>Leukemic T-cell</tissue>
    </source>
</reference>
<reference key="10">
    <citation type="journal article" date="2009" name="Science">
        <title>Lysine acetylation targets protein complexes and co-regulates major cellular functions.</title>
        <authorList>
            <person name="Choudhary C."/>
            <person name="Kumar C."/>
            <person name="Gnad F."/>
            <person name="Nielsen M.L."/>
            <person name="Rehman M."/>
            <person name="Walther T.C."/>
            <person name="Olsen J.V."/>
            <person name="Mann M."/>
        </authorList>
    </citation>
    <scope>ACETYLATION [LARGE SCALE ANALYSIS] AT LYS-114</scope>
    <scope>IDENTIFICATION BY MASS SPECTROMETRY [LARGE SCALE ANALYSIS]</scope>
</reference>
<reference key="11">
    <citation type="journal article" date="2010" name="Sci. Signal.">
        <title>Quantitative phosphoproteomics reveals widespread full phosphorylation site occupancy during mitosis.</title>
        <authorList>
            <person name="Olsen J.V."/>
            <person name="Vermeulen M."/>
            <person name="Santamaria A."/>
            <person name="Kumar C."/>
            <person name="Miller M.L."/>
            <person name="Jensen L.J."/>
            <person name="Gnad F."/>
            <person name="Cox J."/>
            <person name="Jensen T.S."/>
            <person name="Nigg E.A."/>
            <person name="Brunak S."/>
            <person name="Mann M."/>
        </authorList>
    </citation>
    <scope>PHOSPHORYLATION [LARGE SCALE ANALYSIS] AT SER-118</scope>
    <scope>IDENTIFICATION BY MASS SPECTROMETRY [LARGE SCALE ANALYSIS]</scope>
    <source>
        <tissue>Cervix carcinoma</tissue>
    </source>
</reference>
<reference key="12">
    <citation type="journal article" date="2011" name="PLoS ONE">
        <title>The inhibitor of growth protein 5 (ING5) depends on INCA1 as a co-factor for its antiproliferative effects.</title>
        <authorList>
            <person name="Zhang F."/>
            <person name="Baeumer N."/>
            <person name="Rode M."/>
            <person name="Ji P."/>
            <person name="Zhang T."/>
            <person name="Berdel W.E."/>
            <person name="Mueller-Tidow C."/>
        </authorList>
    </citation>
    <scope>FUNCTION</scope>
    <scope>INTERACTION WITH INCA1</scope>
    <scope>TISSUE SPECIFICITY</scope>
</reference>
<reference key="13">
    <citation type="journal article" date="2011" name="Sci. Signal.">
        <title>System-wide temporal characterization of the proteome and phosphoproteome of human embryonic stem cell differentiation.</title>
        <authorList>
            <person name="Rigbolt K.T."/>
            <person name="Prokhorova T.A."/>
            <person name="Akimov V."/>
            <person name="Henningsen J."/>
            <person name="Johansen P.T."/>
            <person name="Kratchmarova I."/>
            <person name="Kassem M."/>
            <person name="Mann M."/>
            <person name="Olsen J.V."/>
            <person name="Blagoev B."/>
        </authorList>
    </citation>
    <scope>PHOSPHORYLATION [LARGE SCALE ANALYSIS] AT SER-118</scope>
    <scope>IDENTIFICATION BY MASS SPECTROMETRY [LARGE SCALE ANALYSIS]</scope>
</reference>
<reference key="14">
    <citation type="journal article" date="2013" name="Genes Dev.">
        <title>Exchange of associated factors directs a switch in HBO1 acetyltransferase histone tail specificity.</title>
        <authorList>
            <person name="Lalonde M.E."/>
            <person name="Avvakumov N."/>
            <person name="Glass K.C."/>
            <person name="Joncas F.H."/>
            <person name="Saksouk N."/>
            <person name="Holliday M."/>
            <person name="Paquet E."/>
            <person name="Yan K."/>
            <person name="Tong Q."/>
            <person name="Klein B.J."/>
            <person name="Tan S."/>
            <person name="Yang X.J."/>
            <person name="Kutateladze T.G."/>
            <person name="Cote J."/>
        </authorList>
    </citation>
    <scope>FUNCTION</scope>
    <scope>IDENTIFICATION IN THE HBO1 COMPLEX</scope>
    <scope>SUBCELLULAR LOCATION</scope>
</reference>
<reference key="15">
    <citation type="journal article" date="2013" name="J. Proteome Res.">
        <title>Toward a comprehensive characterization of a human cancer cell phosphoproteome.</title>
        <authorList>
            <person name="Zhou H."/>
            <person name="Di Palma S."/>
            <person name="Preisinger C."/>
            <person name="Peng M."/>
            <person name="Polat A.N."/>
            <person name="Heck A.J."/>
            <person name="Mohammed S."/>
        </authorList>
    </citation>
    <scope>PHOSPHORYLATION [LARGE SCALE ANALYSIS] AT SER-118</scope>
    <scope>IDENTIFICATION BY MASS SPECTROMETRY [LARGE SCALE ANALYSIS]</scope>
    <source>
        <tissue>Cervix carcinoma</tissue>
        <tissue>Erythroleukemia</tissue>
    </source>
</reference>
<reference key="16">
    <citation type="journal article" date="2014" name="J. Proteomics">
        <title>An enzyme assisted RP-RPLC approach for in-depth analysis of human liver phosphoproteome.</title>
        <authorList>
            <person name="Bian Y."/>
            <person name="Song C."/>
            <person name="Cheng K."/>
            <person name="Dong M."/>
            <person name="Wang F."/>
            <person name="Huang J."/>
            <person name="Sun D."/>
            <person name="Wang L."/>
            <person name="Ye M."/>
            <person name="Zou H."/>
        </authorList>
    </citation>
    <scope>IDENTIFICATION BY MASS SPECTROMETRY [LARGE SCALE ANALYSIS]</scope>
    <source>
        <tissue>Liver</tissue>
    </source>
</reference>
<reference key="17">
    <citation type="journal article" date="2014" name="Mol. Cell. Proteomics">
        <title>Immunoaffinity enrichment and mass spectrometry analysis of protein methylation.</title>
        <authorList>
            <person name="Guo A."/>
            <person name="Gu H."/>
            <person name="Zhou J."/>
            <person name="Mulhern D."/>
            <person name="Wang Y."/>
            <person name="Lee K.A."/>
            <person name="Yang V."/>
            <person name="Aguiar M."/>
            <person name="Kornhauser J."/>
            <person name="Jia X."/>
            <person name="Ren J."/>
            <person name="Beausoleil S.A."/>
            <person name="Silva J.C."/>
            <person name="Vemulapalli V."/>
            <person name="Bedford M.T."/>
            <person name="Comb M.J."/>
        </authorList>
    </citation>
    <scope>METHYLATION [LARGE SCALE ANALYSIS] AT ARG-126</scope>
    <scope>IDENTIFICATION BY MASS SPECTROMETRY [LARGE SCALE ANALYSIS]</scope>
    <source>
        <tissue>Colon carcinoma</tissue>
    </source>
</reference>
<reference key="18">
    <citation type="journal article" date="2008" name="Proteins">
        <title>The crystal structure of the ING5 PHD finger in complex with an H3K4me3 histone peptide.</title>
        <authorList>
            <person name="Champagne K.S."/>
            <person name="Saksouk N."/>
            <person name="Pena P.V."/>
            <person name="Johnson K."/>
            <person name="Ullah M."/>
            <person name="Yang X.J."/>
            <person name="Cote J."/>
            <person name="Kutateladze T.G."/>
        </authorList>
    </citation>
    <scope>X-RAY CRYSTALLOGRAPHY (1.75 ANGSTROMS) OF 184-236 IN COMPLEX WITH HISTONE H2K4ME3 AND ZINC</scope>
    <scope>SUBUNIT</scope>
</reference>
<protein>
    <recommendedName>
        <fullName>Inhibitor of growth protein 5</fullName>
    </recommendedName>
    <alternativeName>
        <fullName>p28ING5</fullName>
    </alternativeName>
</protein>
<sequence length="240" mass="27751">MATAMYLEHYLDSIENLPCELQRNFQLMRELDQRTEDKKAEIDILAAEYISTVKTLSPDQRVERLQKIQNAYSKCKEYSDDKVQLAMQTYEMVDKHIRRLDADLARFEADLKDKMEGSDFESSGGRGLKKGRGQKEKRGSRGRGRRTSEEDTPKKKKHKGGSEFTDTILSVHPSDVLDMPVDPNEPTYCLCHQVSYGEMIGCDNPDCPIEWFHFACVDLTTKPKGKWFCPRCVQEKRKKK</sequence>
<evidence type="ECO:0000255" key="1">
    <source>
        <dbReference type="PROSITE-ProRule" id="PRU00146"/>
    </source>
</evidence>
<evidence type="ECO:0000256" key="2">
    <source>
        <dbReference type="SAM" id="MobiDB-lite"/>
    </source>
</evidence>
<evidence type="ECO:0000269" key="3">
    <source>
    </source>
</evidence>
<evidence type="ECO:0000269" key="4">
    <source>
    </source>
</evidence>
<evidence type="ECO:0000269" key="5">
    <source>
    </source>
</evidence>
<evidence type="ECO:0000269" key="6">
    <source>
    </source>
</evidence>
<evidence type="ECO:0000269" key="7">
    <source>
    </source>
</evidence>
<evidence type="ECO:0000269" key="8">
    <source>
    </source>
</evidence>
<evidence type="ECO:0000269" key="9">
    <source>
    </source>
</evidence>
<evidence type="ECO:0000303" key="10">
    <source>
    </source>
</evidence>
<evidence type="ECO:0000305" key="11"/>
<evidence type="ECO:0007744" key="12">
    <source>
        <dbReference type="PDB" id="3C6W"/>
    </source>
</evidence>
<evidence type="ECO:0007744" key="13">
    <source>
    </source>
</evidence>
<evidence type="ECO:0007744" key="14">
    <source>
    </source>
</evidence>
<evidence type="ECO:0007744" key="15">
    <source>
    </source>
</evidence>
<evidence type="ECO:0007744" key="16">
    <source>
    </source>
</evidence>
<evidence type="ECO:0007744" key="17">
    <source>
    </source>
</evidence>
<evidence type="ECO:0007744" key="18">
    <source>
    </source>
</evidence>
<evidence type="ECO:0007744" key="19">
    <source>
    </source>
</evidence>
<evidence type="ECO:0007829" key="20">
    <source>
        <dbReference type="PDB" id="3C6W"/>
    </source>
</evidence>
<evidence type="ECO:0007829" key="21">
    <source>
        <dbReference type="PDB" id="5ME8"/>
    </source>
</evidence>
<evidence type="ECO:0007829" key="22">
    <source>
        <dbReference type="PDB" id="5MTO"/>
    </source>
</evidence>
<proteinExistence type="evidence at protein level"/>
<name>ING5_HUMAN</name>
<gene>
    <name type="primary">ING5</name>
</gene>
<comment type="function">
    <text evidence="3 4 8 9">Component of the HBO1 complex, which specifically mediates acetylation of histone H3 at 'Lys-14' (H3K14ac) and, to a lower extent, acetylation of histone H4 (PubMed:24065767). Component of the MOZ/MORF complex which has a histone H3 acetyltransferase activity (PubMed:16387653). Through chromatin acetylation it may regulate DNA replication and may function as a transcriptional coactivator (PubMed:12750254, PubMed:16387653). Inhibits cell growth, induces a delay in S-phase progression and enhances Fas-induced apoptosis in an INCA1-dependent manner (PubMed:21750715).</text>
</comment>
<comment type="subunit">
    <text evidence="3 4 5 6 7 8 9">Component of the HBO1 complex composed of KAT7/HBO1, MEAF6, ING5, and one scaffold subunit: complexes containing BRPF scaffold (BRPF1, BRD1/BRPF2 or BRPF3) direct KAT7/HBO1 specificity towards H3K14ac, while complexes containing JADE scaffold (JADE1, JADE2 and JADE3) mediate acetylation of histone H4 (PubMed:16387653, PubMed:24065767). Component of the MOZ/MORF complex composed at least of ING5, KAT6A, KAT6B, MEAF6 and one of BRPF1, BRD1/BRPF2 and BRPF3 (PubMed:16387653, PubMed:18794358). Interacts with H3K4me3 and to a lesser extent with H3K4me2 (PubMed:16728974, PubMed:18623064). Interacts with EP300 and p53/TP53 (PubMed:12750254). Interacts with INCA1 (PubMed:21750715).</text>
</comment>
<comment type="interaction">
    <interactant intactId="EBI-488533">
        <id>Q8WYH8</id>
    </interactant>
    <interactant intactId="EBI-638194">
        <id>P53365</id>
        <label>ARFIP2</label>
    </interactant>
    <organismsDiffer>false</organismsDiffer>
    <experiments>3</experiments>
</comment>
<comment type="interaction">
    <interactant intactId="EBI-488533">
        <id>Q8WYH8</id>
    </interactant>
    <interactant intactId="EBI-741753">
        <id>Q00994</id>
        <label>BEX3</label>
    </interactant>
    <organismsDiffer>false</organismsDiffer>
    <experiments>3</experiments>
</comment>
<comment type="interaction">
    <interactant intactId="EBI-488533">
        <id>Q8WYH8</id>
    </interactant>
    <interactant intactId="EBI-12065306">
        <id>P55201-2</id>
        <label>BRPF1</label>
    </interactant>
    <organismsDiffer>false</organismsDiffer>
    <experiments>3</experiments>
</comment>
<comment type="interaction">
    <interactant intactId="EBI-488533">
        <id>Q8WYH8</id>
    </interactant>
    <interactant intactId="EBI-2837036">
        <id>Q6ZUJ4</id>
        <label>C3orf62</label>
    </interactant>
    <organismsDiffer>false</organismsDiffer>
    <experiments>3</experiments>
</comment>
<comment type="interaction">
    <interactant intactId="EBI-488533">
        <id>Q8WYH8</id>
    </interactant>
    <interactant intactId="EBI-11524851">
        <id>Q8NA61-2</id>
        <label>CBY2</label>
    </interactant>
    <organismsDiffer>false</organismsDiffer>
    <experiments>6</experiments>
</comment>
<comment type="interaction">
    <interactant intactId="EBI-488533">
        <id>Q8WYH8</id>
    </interactant>
    <interactant intactId="EBI-10175300">
        <id>Q8TD31-3</id>
        <label>CCHCR1</label>
    </interactant>
    <organismsDiffer>false</organismsDiffer>
    <experiments>3</experiments>
</comment>
<comment type="interaction">
    <interactant intactId="EBI-488533">
        <id>Q8WYH8</id>
    </interactant>
    <interactant intactId="EBI-5278764">
        <id>Q96GN5</id>
        <label>CDCA7L</label>
    </interactant>
    <organismsDiffer>false</organismsDiffer>
    <experiments>3</experiments>
</comment>
<comment type="interaction">
    <interactant intactId="EBI-488533">
        <id>Q8WYH8</id>
    </interactant>
    <interactant intactId="EBI-744115">
        <id>Q9C0F1</id>
        <label>CEP44</label>
    </interactant>
    <organismsDiffer>false</organismsDiffer>
    <experiments>3</experiments>
</comment>
<comment type="interaction">
    <interactant intactId="EBI-488533">
        <id>Q8WYH8</id>
    </interactant>
    <interactant intactId="EBI-748597">
        <id>Q05D60</id>
        <label>DEUP1</label>
    </interactant>
    <organismsDiffer>false</organismsDiffer>
    <experiments>3</experiments>
</comment>
<comment type="interaction">
    <interactant intactId="EBI-488533">
        <id>Q8WYH8</id>
    </interactant>
    <interactant intactId="EBI-12108696">
        <id>Q9UJY5-4</id>
        <label>GGA1</label>
    </interactant>
    <organismsDiffer>false</organismsDiffer>
    <experiments>3</experiments>
</comment>
<comment type="interaction">
    <interactant intactId="EBI-488533">
        <id>Q8WYH8</id>
    </interactant>
    <interactant intactId="EBI-717919">
        <id>Q4V328</id>
        <label>GRIPAP1</label>
    </interactant>
    <organismsDiffer>false</organismsDiffer>
    <experiments>6</experiments>
</comment>
<comment type="interaction">
    <interactant intactId="EBI-488533">
        <id>Q8WYH8</id>
    </interactant>
    <interactant intactId="EBI-740220">
        <id>O14964</id>
        <label>HGS</label>
    </interactant>
    <organismsDiffer>false</organismsDiffer>
    <experiments>6</experiments>
</comment>
<comment type="interaction">
    <interactant intactId="EBI-488533">
        <id>Q8WYH8</id>
    </interactant>
    <interactant intactId="EBI-1046751">
        <id>Q05084</id>
        <label>ICA1</label>
    </interactant>
    <organismsDiffer>false</organismsDiffer>
    <experiments>3</experiments>
</comment>
<comment type="interaction">
    <interactant intactId="EBI-488533">
        <id>Q8WYH8</id>
    </interactant>
    <interactant intactId="EBI-747204">
        <id>Q9UKT9</id>
        <label>IKZF3</label>
    </interactant>
    <organismsDiffer>false</organismsDiffer>
    <experiments>3</experiments>
</comment>
<comment type="interaction">
    <interactant intactId="EBI-488533">
        <id>Q8WYH8</id>
    </interactant>
    <interactant intactId="EBI-6509505">
        <id>Q0VD86</id>
        <label>INCA1</label>
    </interactant>
    <organismsDiffer>false</organismsDiffer>
    <experiments>4</experiments>
</comment>
<comment type="interaction">
    <interactant intactId="EBI-488533">
        <id>Q8WYH8</id>
    </interactant>
    <interactant intactId="EBI-12094820">
        <id>A0A0C4DFT8</id>
        <label>JADE2</label>
    </interactant>
    <organismsDiffer>false</organismsDiffer>
    <experiments>3</experiments>
</comment>
<comment type="interaction">
    <interactant intactId="EBI-488533">
        <id>Q8WYH8</id>
    </interactant>
    <interactant intactId="EBI-2796167">
        <id>Q9NQC1</id>
        <label>JADE2</label>
    </interactant>
    <organismsDiffer>false</organismsDiffer>
    <experiments>7</experiments>
</comment>
<comment type="interaction">
    <interactant intactId="EBI-488533">
        <id>Q8WYH8</id>
    </interactant>
    <interactant intactId="EBI-10171697">
        <id>Q6A162</id>
        <label>KRT40</label>
    </interactant>
    <organismsDiffer>false</organismsDiffer>
    <experiments>3</experiments>
</comment>
<comment type="interaction">
    <interactant intactId="EBI-488533">
        <id>Q8WYH8</id>
    </interactant>
    <interactant intactId="EBI-10172290">
        <id>P60409</id>
        <label>KRTAP10-7</label>
    </interactant>
    <organismsDiffer>false</organismsDiffer>
    <experiments>3</experiments>
</comment>
<comment type="interaction">
    <interactant intactId="EBI-488533">
        <id>Q8WYH8</id>
    </interactant>
    <interactant intactId="EBI-739657">
        <id>Q9BQD3</id>
        <label>KXD1</label>
    </interactant>
    <organismsDiffer>false</organismsDiffer>
    <experiments>4</experiments>
</comment>
<comment type="interaction">
    <interactant intactId="EBI-488533">
        <id>Q8WYH8</id>
    </interactant>
    <interactant intactId="EBI-10182361">
        <id>Q9NS73-5</id>
        <label>MBIP</label>
    </interactant>
    <organismsDiffer>false</organismsDiffer>
    <experiments>3</experiments>
</comment>
<comment type="interaction">
    <interactant intactId="EBI-488533">
        <id>Q8WYH8</id>
    </interactant>
    <interactant intactId="EBI-741200">
        <id>Q8IVL1</id>
        <label>NAV2</label>
    </interactant>
    <organismsDiffer>false</organismsDiffer>
    <experiments>6</experiments>
</comment>
<comment type="interaction">
    <interactant intactId="EBI-488533">
        <id>Q8WYH8</id>
    </interactant>
    <interactant intactId="EBI-9090919">
        <id>Q5BJF6-2</id>
        <label>ODF2</label>
    </interactant>
    <organismsDiffer>false</organismsDiffer>
    <experiments>3</experiments>
</comment>
<comment type="interaction">
    <interactant intactId="EBI-488533">
        <id>Q8WYH8</id>
    </interactant>
    <interactant intactId="EBI-1504830">
        <id>Q9P2K3-2</id>
        <label>RCOR3</label>
    </interactant>
    <organismsDiffer>false</organismsDiffer>
    <experiments>3</experiments>
</comment>
<comment type="interaction">
    <interactant intactId="EBI-488533">
        <id>Q8WYH8</id>
    </interactant>
    <interactant intactId="EBI-455078">
        <id>Q969G3</id>
        <label>SMARCE1</label>
    </interactant>
    <organismsDiffer>false</organismsDiffer>
    <experiments>3</experiments>
</comment>
<comment type="interaction">
    <interactant intactId="EBI-488533">
        <id>Q8WYH8</id>
    </interactant>
    <interactant intactId="EBI-3921347">
        <id>P51687</id>
        <label>SUOX</label>
    </interactant>
    <organismsDiffer>false</organismsDiffer>
    <experiments>3</experiments>
</comment>
<comment type="interaction">
    <interactant intactId="EBI-488533">
        <id>Q8WYH8</id>
    </interactant>
    <interactant intactId="EBI-3925505">
        <id>Q8TBB0</id>
        <label>THAP6</label>
    </interactant>
    <organismsDiffer>false</organismsDiffer>
    <experiments>3</experiments>
</comment>
<comment type="interaction">
    <interactant intactId="EBI-488533">
        <id>Q8WYH8</id>
    </interactant>
    <interactant intactId="EBI-11059915">
        <id>Q8N7C3</id>
        <label>TRIML2</label>
    </interactant>
    <organismsDiffer>false</organismsDiffer>
    <experiments>3</experiments>
</comment>
<comment type="interaction">
    <interactant intactId="EBI-488533">
        <id>Q8WYH8</id>
    </interactant>
    <interactant intactId="EBI-1548747">
        <id>Q92558</id>
        <label>WASF1</label>
    </interactant>
    <organismsDiffer>false</organismsDiffer>
    <experiments>3</experiments>
</comment>
<comment type="interaction">
    <interactant intactId="EBI-21602071">
        <id>Q8WYH8-2</id>
    </interactant>
    <interactant intactId="EBI-1955541">
        <id>Q53GS7</id>
        <label>GLE1</label>
    </interactant>
    <organismsDiffer>false</organismsDiffer>
    <experiments>3</experiments>
</comment>
<comment type="interaction">
    <interactant intactId="EBI-21602071">
        <id>Q8WYH8-2</id>
    </interactant>
    <interactant intactId="EBI-466029">
        <id>P42858</id>
        <label>HTT</label>
    </interactant>
    <organismsDiffer>false</organismsDiffer>
    <experiments>18</experiments>
</comment>
<comment type="interaction">
    <interactant intactId="EBI-21602071">
        <id>Q8WYH8-2</id>
    </interactant>
    <interactant intactId="EBI-10975473">
        <id>O60333-2</id>
        <label>KIF1B</label>
    </interactant>
    <organismsDiffer>false</organismsDiffer>
    <experiments>3</experiments>
</comment>
<comment type="interaction">
    <interactant intactId="EBI-21602071">
        <id>Q8WYH8-2</id>
    </interactant>
    <interactant intactId="EBI-5235340">
        <id>Q7Z699</id>
        <label>SPRED1</label>
    </interactant>
    <organismsDiffer>false</organismsDiffer>
    <experiments>3</experiments>
</comment>
<comment type="interaction">
    <interactant intactId="EBI-21602071">
        <id>Q8WYH8-2</id>
    </interactant>
    <interactant intactId="EBI-720609">
        <id>O76024</id>
        <label>WFS1</label>
    </interactant>
    <organismsDiffer>false</organismsDiffer>
    <experiments>3</experiments>
</comment>
<comment type="subcellular location">
    <subcellularLocation>
        <location evidence="7">Nucleus</location>
    </subcellularLocation>
    <subcellularLocation>
        <location evidence="9">Chromosome</location>
    </subcellularLocation>
    <text evidence="9">Localizes to transcription start sites.</text>
</comment>
<comment type="alternative products">
    <event type="alternative splicing"/>
    <isoform>
        <id>Q8WYH8-1</id>
        <name>1</name>
        <sequence type="displayed"/>
    </isoform>
    <isoform>
        <id>Q8WYH8-2</id>
        <name>2</name>
        <sequence type="described" ref="VSP_012528"/>
    </isoform>
</comment>
<comment type="tissue specificity">
    <text evidence="8">Down-regulated in bone marrow cells in acute myeloid leukemia patients as compared with normal bone marrow cells.</text>
</comment>
<comment type="domain">
    <text evidence="5">The PHD-type zinc finger mediates the binding to H3K4me3.</text>
</comment>
<comment type="similarity">
    <text evidence="11">Belongs to the ING family.</text>
</comment>
<dbReference type="EMBL" id="AF189286">
    <property type="protein sequence ID" value="AAL68979.1"/>
    <property type="molecule type" value="mRNA"/>
</dbReference>
<dbReference type="EMBL" id="AK074422">
    <property type="protein sequence ID" value="BAB85078.1"/>
    <property type="molecule type" value="mRNA"/>
</dbReference>
<dbReference type="EMBL" id="AK289958">
    <property type="protein sequence ID" value="BAF82647.1"/>
    <property type="molecule type" value="mRNA"/>
</dbReference>
<dbReference type="EMBL" id="AC114730">
    <property type="protein sequence ID" value="AAX82019.1"/>
    <property type="molecule type" value="Genomic_DNA"/>
</dbReference>
<dbReference type="EMBL" id="AC133528">
    <property type="protein sequence ID" value="AAY14921.1"/>
    <property type="molecule type" value="Genomic_DNA"/>
</dbReference>
<dbReference type="EMBL" id="BC005370">
    <property type="protein sequence ID" value="AAH05370.1"/>
    <property type="molecule type" value="mRNA"/>
</dbReference>
<dbReference type="EMBL" id="BC071899">
    <property type="protein sequence ID" value="AAH71899.1"/>
    <property type="molecule type" value="mRNA"/>
</dbReference>
<dbReference type="CCDS" id="CCDS33425.1">
    <molecule id="Q8WYH8-1"/>
</dbReference>
<dbReference type="CCDS" id="CCDS82586.1">
    <molecule id="Q8WYH8-2"/>
</dbReference>
<dbReference type="RefSeq" id="NP_001317091.1">
    <molecule id="Q8WYH8-2"/>
    <property type="nucleotide sequence ID" value="NM_001330162.2"/>
</dbReference>
<dbReference type="RefSeq" id="NP_115705.2">
    <molecule id="Q8WYH8-1"/>
    <property type="nucleotide sequence ID" value="NM_032329.5"/>
</dbReference>
<dbReference type="RefSeq" id="XP_047301969.1">
    <molecule id="Q8WYH8-2"/>
    <property type="nucleotide sequence ID" value="XM_047446013.1"/>
</dbReference>
<dbReference type="RefSeq" id="XP_054200158.1">
    <molecule id="Q8WYH8-2"/>
    <property type="nucleotide sequence ID" value="XM_054344183.1"/>
</dbReference>
<dbReference type="PDB" id="3C6W">
    <property type="method" value="X-ray"/>
    <property type="resolution" value="1.75 A"/>
    <property type="chains" value="A/C=184-236"/>
</dbReference>
<dbReference type="PDB" id="5ME8">
    <property type="method" value="X-ray"/>
    <property type="resolution" value="3.20 A"/>
    <property type="chains" value="A/B=1-105"/>
</dbReference>
<dbReference type="PDB" id="5MTO">
    <property type="method" value="X-ray"/>
    <property type="resolution" value="3.10 A"/>
    <property type="chains" value="A/B=1-105"/>
</dbReference>
<dbReference type="PDBsum" id="3C6W"/>
<dbReference type="PDBsum" id="5ME8"/>
<dbReference type="PDBsum" id="5MTO"/>
<dbReference type="SMR" id="Q8WYH8"/>
<dbReference type="BioGRID" id="124016">
    <property type="interactions" value="117"/>
</dbReference>
<dbReference type="ComplexPortal" id="CPX-721">
    <property type="entry name" value="HBO1-5.1 histone acetyltransferase complex"/>
</dbReference>
<dbReference type="ComplexPortal" id="CPX-722">
    <property type="entry name" value="HBO1-5.2 histone acetyltransferase complex"/>
</dbReference>
<dbReference type="ComplexPortal" id="CPX-723">
    <property type="entry name" value="HBO1-5.3 histone acetyltransferase complex"/>
</dbReference>
<dbReference type="ComplexPortal" id="CPX-727">
    <property type="entry name" value="MOZ1 histone acetyltransferase complex"/>
</dbReference>
<dbReference type="ComplexPortal" id="CPX-733">
    <property type="entry name" value="MOZ2 histone acetyltransferase complex"/>
</dbReference>
<dbReference type="ComplexPortal" id="CPX-736">
    <property type="entry name" value="MOZ3 histone acetyltransferase complex"/>
</dbReference>
<dbReference type="ComplexPortal" id="CPX-738">
    <property type="entry name" value="MORF1 histone acetyltransferase complex"/>
</dbReference>
<dbReference type="ComplexPortal" id="CPX-739">
    <property type="entry name" value="MORF2 histone acetyltransferase complex"/>
</dbReference>
<dbReference type="ComplexPortal" id="CPX-740">
    <property type="entry name" value="MORF3 histone acetyltransferase complex"/>
</dbReference>
<dbReference type="CORUM" id="Q8WYH8"/>
<dbReference type="DIP" id="DIP-32511N"/>
<dbReference type="FunCoup" id="Q8WYH8">
    <property type="interactions" value="2641"/>
</dbReference>
<dbReference type="IntAct" id="Q8WYH8">
    <property type="interactions" value="99"/>
</dbReference>
<dbReference type="MINT" id="Q8WYH8"/>
<dbReference type="STRING" id="9606.ENSP00000490767"/>
<dbReference type="iPTMnet" id="Q8WYH8"/>
<dbReference type="PhosphoSitePlus" id="Q8WYH8"/>
<dbReference type="BioMuta" id="ING5"/>
<dbReference type="DMDM" id="57012960"/>
<dbReference type="jPOST" id="Q8WYH8"/>
<dbReference type="MassIVE" id="Q8WYH8"/>
<dbReference type="PaxDb" id="9606-ENSP00000322142"/>
<dbReference type="PeptideAtlas" id="Q8WYH8"/>
<dbReference type="ProteomicsDB" id="75158">
    <molecule id="Q8WYH8-1"/>
</dbReference>
<dbReference type="ProteomicsDB" id="75159">
    <molecule id="Q8WYH8-2"/>
</dbReference>
<dbReference type="Pumba" id="Q8WYH8"/>
<dbReference type="Antibodypedia" id="34573">
    <property type="antibodies" value="231 antibodies from 32 providers"/>
</dbReference>
<dbReference type="DNASU" id="84289"/>
<dbReference type="Ensembl" id="ENST00000313552.11">
    <molecule id="Q8WYH8-1"/>
    <property type="protein sequence ID" value="ENSP00000322142.7"/>
    <property type="gene ID" value="ENSG00000168395.16"/>
</dbReference>
<dbReference type="Ensembl" id="ENST00000406941.5">
    <molecule id="Q8WYH8-2"/>
    <property type="protein sequence ID" value="ENSP00000385937.1"/>
    <property type="gene ID" value="ENSG00000168395.16"/>
</dbReference>
<dbReference type="GeneID" id="84289"/>
<dbReference type="KEGG" id="hsa:84289"/>
<dbReference type="MANE-Select" id="ENST00000313552.11">
    <property type="protein sequence ID" value="ENSP00000322142.7"/>
    <property type="RefSeq nucleotide sequence ID" value="NM_032329.6"/>
    <property type="RefSeq protein sequence ID" value="NP_115705.2"/>
</dbReference>
<dbReference type="UCSC" id="uc002wcd.4">
    <molecule id="Q8WYH8-1"/>
    <property type="organism name" value="human"/>
</dbReference>
<dbReference type="AGR" id="HGNC:19421"/>
<dbReference type="CTD" id="84289"/>
<dbReference type="DisGeNET" id="84289"/>
<dbReference type="GeneCards" id="ING5"/>
<dbReference type="HGNC" id="HGNC:19421">
    <property type="gene designation" value="ING5"/>
</dbReference>
<dbReference type="HPA" id="ENSG00000168395">
    <property type="expression patterns" value="Low tissue specificity"/>
</dbReference>
<dbReference type="MIM" id="608525">
    <property type="type" value="gene"/>
</dbReference>
<dbReference type="neXtProt" id="NX_Q8WYH8"/>
<dbReference type="OpenTargets" id="ENSG00000168395"/>
<dbReference type="PharmGKB" id="PA134935441"/>
<dbReference type="VEuPathDB" id="HostDB:ENSG00000168395"/>
<dbReference type="eggNOG" id="KOG1973">
    <property type="taxonomic scope" value="Eukaryota"/>
</dbReference>
<dbReference type="GeneTree" id="ENSGT00940000158159"/>
<dbReference type="HOGENOM" id="CLU_031900_5_1_1"/>
<dbReference type="InParanoid" id="Q8WYH8"/>
<dbReference type="OMA" id="QPKGKWF"/>
<dbReference type="OrthoDB" id="5411773at2759"/>
<dbReference type="PAN-GO" id="Q8WYH8">
    <property type="GO annotations" value="5 GO annotations based on evolutionary models"/>
</dbReference>
<dbReference type="PhylomeDB" id="Q8WYH8"/>
<dbReference type="TreeFam" id="TF352014"/>
<dbReference type="PathwayCommons" id="Q8WYH8"/>
<dbReference type="Reactome" id="R-HSA-3214847">
    <property type="pathway name" value="HATs acetylate histones"/>
</dbReference>
<dbReference type="Reactome" id="R-HSA-6804758">
    <property type="pathway name" value="Regulation of TP53 Activity through Acetylation"/>
</dbReference>
<dbReference type="SignaLink" id="Q8WYH8"/>
<dbReference type="BioGRID-ORCS" id="84289">
    <property type="hits" value="25 hits in 1161 CRISPR screens"/>
</dbReference>
<dbReference type="EvolutionaryTrace" id="Q8WYH8"/>
<dbReference type="GeneWiki" id="ING5"/>
<dbReference type="GenomeRNAi" id="84289"/>
<dbReference type="Pharos" id="Q8WYH8">
    <property type="development level" value="Tbio"/>
</dbReference>
<dbReference type="PRO" id="PR:Q8WYH8"/>
<dbReference type="Proteomes" id="UP000005640">
    <property type="component" value="Chromosome 2"/>
</dbReference>
<dbReference type="RNAct" id="Q8WYH8">
    <property type="molecule type" value="protein"/>
</dbReference>
<dbReference type="Bgee" id="ENSG00000168395">
    <property type="expression patterns" value="Expressed in sural nerve and 180 other cell types or tissues"/>
</dbReference>
<dbReference type="ExpressionAtlas" id="Q8WYH8">
    <property type="expression patterns" value="baseline and differential"/>
</dbReference>
<dbReference type="GO" id="GO:0000123">
    <property type="term" value="C:histone acetyltransferase complex"/>
    <property type="evidence" value="ECO:0000314"/>
    <property type="project" value="UniProtKB"/>
</dbReference>
<dbReference type="GO" id="GO:0070776">
    <property type="term" value="C:MOZ/MORF histone acetyltransferase complex"/>
    <property type="evidence" value="ECO:0000314"/>
    <property type="project" value="UniProtKB"/>
</dbReference>
<dbReference type="GO" id="GO:0005654">
    <property type="term" value="C:nucleoplasm"/>
    <property type="evidence" value="ECO:0000314"/>
    <property type="project" value="ComplexPortal"/>
</dbReference>
<dbReference type="GO" id="GO:0005634">
    <property type="term" value="C:nucleus"/>
    <property type="evidence" value="ECO:0000314"/>
    <property type="project" value="UniProtKB"/>
</dbReference>
<dbReference type="GO" id="GO:0003682">
    <property type="term" value="F:chromatin binding"/>
    <property type="evidence" value="ECO:0000318"/>
    <property type="project" value="GO_Central"/>
</dbReference>
<dbReference type="GO" id="GO:0140002">
    <property type="term" value="F:histone H3K4me3 reader activity"/>
    <property type="evidence" value="ECO:0000314"/>
    <property type="project" value="UniProtKB"/>
</dbReference>
<dbReference type="GO" id="GO:0035064">
    <property type="term" value="F:methylated histone binding"/>
    <property type="evidence" value="ECO:0000318"/>
    <property type="project" value="GO_Central"/>
</dbReference>
<dbReference type="GO" id="GO:0008270">
    <property type="term" value="F:zinc ion binding"/>
    <property type="evidence" value="ECO:0007669"/>
    <property type="project" value="UniProtKB-KW"/>
</dbReference>
<dbReference type="GO" id="GO:0097190">
    <property type="term" value="P:apoptotic signaling pathway"/>
    <property type="evidence" value="ECO:0007669"/>
    <property type="project" value="Ensembl"/>
</dbReference>
<dbReference type="GO" id="GO:0140889">
    <property type="term" value="P:DNA replication-dependent chromatin disassembly"/>
    <property type="evidence" value="ECO:0000314"/>
    <property type="project" value="UniProtKB"/>
</dbReference>
<dbReference type="GO" id="GO:0048144">
    <property type="term" value="P:fibroblast proliferation"/>
    <property type="evidence" value="ECO:0007669"/>
    <property type="project" value="Ensembl"/>
</dbReference>
<dbReference type="GO" id="GO:0008285">
    <property type="term" value="P:negative regulation of cell population proliferation"/>
    <property type="evidence" value="ECO:0000314"/>
    <property type="project" value="UniProtKB"/>
</dbReference>
<dbReference type="GO" id="GO:0048147">
    <property type="term" value="P:negative regulation of fibroblast proliferation"/>
    <property type="evidence" value="ECO:0007669"/>
    <property type="project" value="Ensembl"/>
</dbReference>
<dbReference type="GO" id="GO:0045926">
    <property type="term" value="P:negative regulation of growth"/>
    <property type="evidence" value="ECO:0000314"/>
    <property type="project" value="UniProtKB"/>
</dbReference>
<dbReference type="GO" id="GO:0043065">
    <property type="term" value="P:positive regulation of apoptotic process"/>
    <property type="evidence" value="ECO:0000316"/>
    <property type="project" value="MGI"/>
</dbReference>
<dbReference type="GO" id="GO:2001235">
    <property type="term" value="P:positive regulation of apoptotic signaling pathway"/>
    <property type="evidence" value="ECO:0000318"/>
    <property type="project" value="GO_Central"/>
</dbReference>
<dbReference type="GO" id="GO:0006473">
    <property type="term" value="P:protein acetylation"/>
    <property type="evidence" value="ECO:0000314"/>
    <property type="project" value="UniProtKB"/>
</dbReference>
<dbReference type="GO" id="GO:0051726">
    <property type="term" value="P:regulation of cell cycle"/>
    <property type="evidence" value="ECO:0000314"/>
    <property type="project" value="ComplexPortal"/>
</dbReference>
<dbReference type="GO" id="GO:0001558">
    <property type="term" value="P:regulation of cell growth"/>
    <property type="evidence" value="ECO:0000314"/>
    <property type="project" value="ComplexPortal"/>
</dbReference>
<dbReference type="GO" id="GO:0050793">
    <property type="term" value="P:regulation of developmental process"/>
    <property type="evidence" value="ECO:0000303"/>
    <property type="project" value="ComplexPortal"/>
</dbReference>
<dbReference type="GO" id="GO:2000278">
    <property type="term" value="P:regulation of DNA biosynthetic process"/>
    <property type="evidence" value="ECO:0000314"/>
    <property type="project" value="ComplexPortal"/>
</dbReference>
<dbReference type="GO" id="GO:0006275">
    <property type="term" value="P:regulation of DNA replication"/>
    <property type="evidence" value="ECO:0000314"/>
    <property type="project" value="ComplexPortal"/>
</dbReference>
<dbReference type="GO" id="GO:0006355">
    <property type="term" value="P:regulation of DNA-templated transcription"/>
    <property type="evidence" value="ECO:0000314"/>
    <property type="project" value="ComplexPortal"/>
</dbReference>
<dbReference type="GO" id="GO:1903706">
    <property type="term" value="P:regulation of hemopoiesis"/>
    <property type="evidence" value="ECO:0000303"/>
    <property type="project" value="ComplexPortal"/>
</dbReference>
<dbReference type="CDD" id="cd16863">
    <property type="entry name" value="ING_ING5"/>
    <property type="match status" value="1"/>
</dbReference>
<dbReference type="CDD" id="cd15685">
    <property type="entry name" value="PHD_ING5"/>
    <property type="match status" value="1"/>
</dbReference>
<dbReference type="FunFam" id="3.30.40.10:FF:000016">
    <property type="entry name" value="Inhibitor of growth protein"/>
    <property type="match status" value="1"/>
</dbReference>
<dbReference type="Gene3D" id="6.10.140.1740">
    <property type="match status" value="1"/>
</dbReference>
<dbReference type="Gene3D" id="3.30.40.10">
    <property type="entry name" value="Zinc/RING finger domain, C3HC4 (zinc finger)"/>
    <property type="match status" value="1"/>
</dbReference>
<dbReference type="InterPro" id="IPR028651">
    <property type="entry name" value="ING_fam"/>
</dbReference>
<dbReference type="InterPro" id="IPR024610">
    <property type="entry name" value="ING_N_histone-binding"/>
</dbReference>
<dbReference type="InterPro" id="IPR019786">
    <property type="entry name" value="Zinc_finger_PHD-type_CS"/>
</dbReference>
<dbReference type="InterPro" id="IPR011011">
    <property type="entry name" value="Znf_FYVE_PHD"/>
</dbReference>
<dbReference type="InterPro" id="IPR001965">
    <property type="entry name" value="Znf_PHD"/>
</dbReference>
<dbReference type="InterPro" id="IPR019787">
    <property type="entry name" value="Znf_PHD-finger"/>
</dbReference>
<dbReference type="InterPro" id="IPR013083">
    <property type="entry name" value="Znf_RING/FYVE/PHD"/>
</dbReference>
<dbReference type="PANTHER" id="PTHR10333">
    <property type="entry name" value="INHIBITOR OF GROWTH PROTEIN"/>
    <property type="match status" value="1"/>
</dbReference>
<dbReference type="PANTHER" id="PTHR10333:SF41">
    <property type="entry name" value="INHIBITOR OF GROWTH PROTEIN 5"/>
    <property type="match status" value="1"/>
</dbReference>
<dbReference type="Pfam" id="PF12998">
    <property type="entry name" value="ING"/>
    <property type="match status" value="1"/>
</dbReference>
<dbReference type="SMART" id="SM01408">
    <property type="entry name" value="ING"/>
    <property type="match status" value="1"/>
</dbReference>
<dbReference type="SMART" id="SM00249">
    <property type="entry name" value="PHD"/>
    <property type="match status" value="1"/>
</dbReference>
<dbReference type="SUPFAM" id="SSF57903">
    <property type="entry name" value="FYVE/PHD zinc finger"/>
    <property type="match status" value="1"/>
</dbReference>
<dbReference type="PROSITE" id="PS01359">
    <property type="entry name" value="ZF_PHD_1"/>
    <property type="match status" value="1"/>
</dbReference>
<dbReference type="PROSITE" id="PS50016">
    <property type="entry name" value="ZF_PHD_2"/>
    <property type="match status" value="1"/>
</dbReference>